<reference key="1">
    <citation type="journal article" date="2006" name="J. Bacteriol.">
        <title>Comparative genomic analysis of three strains of Ehrlichia ruminantium reveals an active process of genome size plasticity.</title>
        <authorList>
            <person name="Frutos R."/>
            <person name="Viari A."/>
            <person name="Ferraz C."/>
            <person name="Morgat A."/>
            <person name="Eychenie S."/>
            <person name="Kandassamy Y."/>
            <person name="Chantal I."/>
            <person name="Bensaid A."/>
            <person name="Coissac E."/>
            <person name="Vachiery N."/>
            <person name="Demaille J."/>
            <person name="Martinez D."/>
        </authorList>
    </citation>
    <scope>NUCLEOTIDE SEQUENCE [LARGE SCALE GENOMIC DNA]</scope>
    <source>
        <strain>Gardel</strain>
    </source>
</reference>
<accession>Q5FH96</accession>
<proteinExistence type="inferred from homology"/>
<feature type="chain" id="PRO_0000270664" description="Large ribosomal subunit protein bL21">
    <location>
        <begin position="1"/>
        <end position="102"/>
    </location>
</feature>
<sequence>MFAIIETGGKQYKVKEHDIIRIEKLNASVGEEVTLSKVIALTGVDNEVIFTQNASVTASVLEQCRNDKVIIFKKKRRKNYRRKNGHRQYMTVLRITKINNME</sequence>
<gene>
    <name evidence="1" type="primary">rplU</name>
    <name type="ordered locus">ERGA_CDS_04950</name>
</gene>
<organism>
    <name type="scientific">Ehrlichia ruminantium (strain Gardel)</name>
    <dbReference type="NCBI Taxonomy" id="302409"/>
    <lineage>
        <taxon>Bacteria</taxon>
        <taxon>Pseudomonadati</taxon>
        <taxon>Pseudomonadota</taxon>
        <taxon>Alphaproteobacteria</taxon>
        <taxon>Rickettsiales</taxon>
        <taxon>Anaplasmataceae</taxon>
        <taxon>Ehrlichia</taxon>
    </lineage>
</organism>
<protein>
    <recommendedName>
        <fullName evidence="1">Large ribosomal subunit protein bL21</fullName>
    </recommendedName>
    <alternativeName>
        <fullName evidence="2">50S ribosomal protein L21</fullName>
    </alternativeName>
</protein>
<comment type="function">
    <text evidence="1">This protein binds to 23S rRNA in the presence of protein L20.</text>
</comment>
<comment type="subunit">
    <text evidence="1">Part of the 50S ribosomal subunit. Contacts protein L20.</text>
</comment>
<comment type="similarity">
    <text evidence="1">Belongs to the bacterial ribosomal protein bL21 family.</text>
</comment>
<keyword id="KW-0687">Ribonucleoprotein</keyword>
<keyword id="KW-0689">Ribosomal protein</keyword>
<keyword id="KW-0694">RNA-binding</keyword>
<keyword id="KW-0699">rRNA-binding</keyword>
<evidence type="ECO:0000255" key="1">
    <source>
        <dbReference type="HAMAP-Rule" id="MF_01363"/>
    </source>
</evidence>
<evidence type="ECO:0000305" key="2"/>
<dbReference type="EMBL" id="CR925677">
    <property type="protein sequence ID" value="CAI27947.1"/>
    <property type="molecule type" value="Genomic_DNA"/>
</dbReference>
<dbReference type="RefSeq" id="WP_011255614.1">
    <property type="nucleotide sequence ID" value="NC_006831.1"/>
</dbReference>
<dbReference type="SMR" id="Q5FH96"/>
<dbReference type="KEGG" id="erg:ERGA_CDS_04950"/>
<dbReference type="HOGENOM" id="CLU_061463_3_2_5"/>
<dbReference type="OrthoDB" id="9813334at2"/>
<dbReference type="Proteomes" id="UP000000533">
    <property type="component" value="Chromosome"/>
</dbReference>
<dbReference type="GO" id="GO:0005737">
    <property type="term" value="C:cytoplasm"/>
    <property type="evidence" value="ECO:0007669"/>
    <property type="project" value="UniProtKB-ARBA"/>
</dbReference>
<dbReference type="GO" id="GO:1990904">
    <property type="term" value="C:ribonucleoprotein complex"/>
    <property type="evidence" value="ECO:0007669"/>
    <property type="project" value="UniProtKB-KW"/>
</dbReference>
<dbReference type="GO" id="GO:0005840">
    <property type="term" value="C:ribosome"/>
    <property type="evidence" value="ECO:0007669"/>
    <property type="project" value="UniProtKB-KW"/>
</dbReference>
<dbReference type="GO" id="GO:0019843">
    <property type="term" value="F:rRNA binding"/>
    <property type="evidence" value="ECO:0007669"/>
    <property type="project" value="UniProtKB-UniRule"/>
</dbReference>
<dbReference type="GO" id="GO:0003735">
    <property type="term" value="F:structural constituent of ribosome"/>
    <property type="evidence" value="ECO:0007669"/>
    <property type="project" value="InterPro"/>
</dbReference>
<dbReference type="GO" id="GO:0006412">
    <property type="term" value="P:translation"/>
    <property type="evidence" value="ECO:0007669"/>
    <property type="project" value="UniProtKB-UniRule"/>
</dbReference>
<dbReference type="HAMAP" id="MF_01363">
    <property type="entry name" value="Ribosomal_bL21"/>
    <property type="match status" value="1"/>
</dbReference>
<dbReference type="InterPro" id="IPR028909">
    <property type="entry name" value="bL21-like"/>
</dbReference>
<dbReference type="InterPro" id="IPR036164">
    <property type="entry name" value="bL21-like_sf"/>
</dbReference>
<dbReference type="InterPro" id="IPR001787">
    <property type="entry name" value="Ribosomal_bL21"/>
</dbReference>
<dbReference type="InterPro" id="IPR018258">
    <property type="entry name" value="Ribosomal_bL21_CS"/>
</dbReference>
<dbReference type="NCBIfam" id="TIGR00061">
    <property type="entry name" value="L21"/>
    <property type="match status" value="1"/>
</dbReference>
<dbReference type="PANTHER" id="PTHR21349">
    <property type="entry name" value="50S RIBOSOMAL PROTEIN L21"/>
    <property type="match status" value="1"/>
</dbReference>
<dbReference type="PANTHER" id="PTHR21349:SF0">
    <property type="entry name" value="LARGE RIBOSOMAL SUBUNIT PROTEIN BL21M"/>
    <property type="match status" value="1"/>
</dbReference>
<dbReference type="Pfam" id="PF00829">
    <property type="entry name" value="Ribosomal_L21p"/>
    <property type="match status" value="1"/>
</dbReference>
<dbReference type="SUPFAM" id="SSF141091">
    <property type="entry name" value="L21p-like"/>
    <property type="match status" value="1"/>
</dbReference>
<dbReference type="PROSITE" id="PS01169">
    <property type="entry name" value="RIBOSOMAL_L21"/>
    <property type="match status" value="1"/>
</dbReference>
<name>RL21_EHRRG</name>